<organism>
    <name type="scientific">Bos taurus</name>
    <name type="common">Bovine</name>
    <dbReference type="NCBI Taxonomy" id="9913"/>
    <lineage>
        <taxon>Eukaryota</taxon>
        <taxon>Metazoa</taxon>
        <taxon>Chordata</taxon>
        <taxon>Craniata</taxon>
        <taxon>Vertebrata</taxon>
        <taxon>Euteleostomi</taxon>
        <taxon>Mammalia</taxon>
        <taxon>Eutheria</taxon>
        <taxon>Laurasiatheria</taxon>
        <taxon>Artiodactyla</taxon>
        <taxon>Ruminantia</taxon>
        <taxon>Pecora</taxon>
        <taxon>Bovidae</taxon>
        <taxon>Bovinae</taxon>
        <taxon>Bos</taxon>
    </lineage>
</organism>
<name>PPIL1_BOVIN</name>
<keyword id="KW-0413">Isomerase</keyword>
<keyword id="KW-0507">mRNA processing</keyword>
<keyword id="KW-0508">mRNA splicing</keyword>
<keyword id="KW-0539">Nucleus</keyword>
<keyword id="KW-0597">Phosphoprotein</keyword>
<keyword id="KW-1185">Reference proteome</keyword>
<keyword id="KW-0697">Rotamase</keyword>
<keyword id="KW-0747">Spliceosome</keyword>
<sequence length="166" mass="18237">MAAIPPDSWQPPNVYLETSMGIIVLELYWKHAPKTCKNFAELARRGYYNGTKFHRIIKDFMIQGGDPTGTGRGGASIYGKQFEDELHPDLKFTGAGILAMANAGPDTNGSQFFVTLAPTQWLDGKHTIFGRVCQGIGMVNRVGMVETNSQDRPVDDVKIIKAYPSG</sequence>
<evidence type="ECO:0000250" key="1"/>
<evidence type="ECO:0000250" key="2">
    <source>
        <dbReference type="UniProtKB" id="Q9Y3C6"/>
    </source>
</evidence>
<evidence type="ECO:0000255" key="3">
    <source>
        <dbReference type="PROSITE-ProRule" id="PRU00156"/>
    </source>
</evidence>
<evidence type="ECO:0000305" key="4"/>
<protein>
    <recommendedName>
        <fullName>Peptidyl-prolyl cis-trans isomerase-like 1</fullName>
        <shortName>PPIase</shortName>
        <ecNumber evidence="2">5.2.1.8</ecNumber>
    </recommendedName>
    <alternativeName>
        <fullName>Rotamase PPIL1</fullName>
    </alternativeName>
</protein>
<dbReference type="EC" id="5.2.1.8" evidence="2"/>
<dbReference type="EMBL" id="BT021028">
    <property type="protein sequence ID" value="AAX09045.1"/>
    <property type="molecule type" value="mRNA"/>
</dbReference>
<dbReference type="EMBL" id="BC102396">
    <property type="protein sequence ID" value="AAI02397.1"/>
    <property type="molecule type" value="mRNA"/>
</dbReference>
<dbReference type="RefSeq" id="NP_001014869.1">
    <property type="nucleotide sequence ID" value="NM_001014869.1"/>
</dbReference>
<dbReference type="BMRB" id="Q5E992"/>
<dbReference type="SMR" id="Q5E992"/>
<dbReference type="FunCoup" id="Q5E992">
    <property type="interactions" value="3525"/>
</dbReference>
<dbReference type="STRING" id="9913.ENSBTAP00000003071"/>
<dbReference type="PaxDb" id="9913-ENSBTAP00000003071"/>
<dbReference type="PeptideAtlas" id="Q5E992"/>
<dbReference type="Ensembl" id="ENSBTAT00000003071.3">
    <property type="protein sequence ID" value="ENSBTAP00000003071.1"/>
    <property type="gene ID" value="ENSBTAG00000002376.3"/>
</dbReference>
<dbReference type="GeneID" id="508179"/>
<dbReference type="KEGG" id="bta:508179"/>
<dbReference type="CTD" id="51645"/>
<dbReference type="VEuPathDB" id="HostDB:ENSBTAG00000002376"/>
<dbReference type="VGNC" id="VGNC:33201">
    <property type="gene designation" value="PPIL1"/>
</dbReference>
<dbReference type="eggNOG" id="KOG0881">
    <property type="taxonomic scope" value="Eukaryota"/>
</dbReference>
<dbReference type="GeneTree" id="ENSGT00940000168151"/>
<dbReference type="HOGENOM" id="CLU_012062_16_3_1"/>
<dbReference type="InParanoid" id="Q5E992"/>
<dbReference type="OMA" id="ELYNDHA"/>
<dbReference type="OrthoDB" id="5916692at2759"/>
<dbReference type="TreeFam" id="TF300200"/>
<dbReference type="Reactome" id="R-BTA-72163">
    <property type="pathway name" value="mRNA Splicing - Major Pathway"/>
</dbReference>
<dbReference type="Proteomes" id="UP000009136">
    <property type="component" value="Chromosome 23"/>
</dbReference>
<dbReference type="Bgee" id="ENSBTAG00000002376">
    <property type="expression patterns" value="Expressed in diaphragm and 104 other cell types or tissues"/>
</dbReference>
<dbReference type="GO" id="GO:0071013">
    <property type="term" value="C:catalytic step 2 spliceosome"/>
    <property type="evidence" value="ECO:0000318"/>
    <property type="project" value="GO_Central"/>
</dbReference>
<dbReference type="GO" id="GO:0005634">
    <property type="term" value="C:nucleus"/>
    <property type="evidence" value="ECO:0000250"/>
    <property type="project" value="UniProtKB"/>
</dbReference>
<dbReference type="GO" id="GO:0071007">
    <property type="term" value="C:U2-type catalytic step 2 spliceosome"/>
    <property type="evidence" value="ECO:0000250"/>
    <property type="project" value="UniProtKB"/>
</dbReference>
<dbReference type="GO" id="GO:0003755">
    <property type="term" value="F:peptidyl-prolyl cis-trans isomerase activity"/>
    <property type="evidence" value="ECO:0000250"/>
    <property type="project" value="UniProtKB"/>
</dbReference>
<dbReference type="GO" id="GO:1990403">
    <property type="term" value="P:embryonic brain development"/>
    <property type="evidence" value="ECO:0000250"/>
    <property type="project" value="UniProtKB"/>
</dbReference>
<dbReference type="GO" id="GO:0000398">
    <property type="term" value="P:mRNA splicing, via spliceosome"/>
    <property type="evidence" value="ECO:0000250"/>
    <property type="project" value="UniProtKB"/>
</dbReference>
<dbReference type="GO" id="GO:0006457">
    <property type="term" value="P:protein folding"/>
    <property type="evidence" value="ECO:0000318"/>
    <property type="project" value="GO_Central"/>
</dbReference>
<dbReference type="GO" id="GO:0000413">
    <property type="term" value="P:protein peptidyl-prolyl isomerization"/>
    <property type="evidence" value="ECO:0000250"/>
    <property type="project" value="UniProtKB"/>
</dbReference>
<dbReference type="CDD" id="cd01922">
    <property type="entry name" value="cyclophilin_SpCYP2_like"/>
    <property type="match status" value="1"/>
</dbReference>
<dbReference type="FunFam" id="2.40.100.10:FF:000008">
    <property type="entry name" value="Peptidyl-prolyl cis-trans isomerase"/>
    <property type="match status" value="1"/>
</dbReference>
<dbReference type="Gene3D" id="2.40.100.10">
    <property type="entry name" value="Cyclophilin-like"/>
    <property type="match status" value="1"/>
</dbReference>
<dbReference type="InterPro" id="IPR029000">
    <property type="entry name" value="Cyclophilin-like_dom_sf"/>
</dbReference>
<dbReference type="InterPro" id="IPR024936">
    <property type="entry name" value="Cyclophilin-type_PPIase"/>
</dbReference>
<dbReference type="InterPro" id="IPR020892">
    <property type="entry name" value="Cyclophilin-type_PPIase_CS"/>
</dbReference>
<dbReference type="InterPro" id="IPR002130">
    <property type="entry name" value="Cyclophilin-type_PPIase_dom"/>
</dbReference>
<dbReference type="InterPro" id="IPR044666">
    <property type="entry name" value="Cyclophilin_A-like"/>
</dbReference>
<dbReference type="PANTHER" id="PTHR45625">
    <property type="entry name" value="PEPTIDYL-PROLYL CIS-TRANS ISOMERASE-RELATED"/>
    <property type="match status" value="1"/>
</dbReference>
<dbReference type="PANTHER" id="PTHR45625:SF4">
    <property type="entry name" value="PEPTIDYLPROLYL ISOMERASE DOMAIN AND WD REPEAT-CONTAINING PROTEIN 1"/>
    <property type="match status" value="1"/>
</dbReference>
<dbReference type="Pfam" id="PF00160">
    <property type="entry name" value="Pro_isomerase"/>
    <property type="match status" value="1"/>
</dbReference>
<dbReference type="PIRSF" id="PIRSF001467">
    <property type="entry name" value="Peptidylpro_ismrse"/>
    <property type="match status" value="1"/>
</dbReference>
<dbReference type="PRINTS" id="PR00153">
    <property type="entry name" value="CSAPPISMRASE"/>
</dbReference>
<dbReference type="SUPFAM" id="SSF50891">
    <property type="entry name" value="Cyclophilin-like"/>
    <property type="match status" value="1"/>
</dbReference>
<dbReference type="PROSITE" id="PS00170">
    <property type="entry name" value="CSA_PPIASE_1"/>
    <property type="match status" value="1"/>
</dbReference>
<dbReference type="PROSITE" id="PS50072">
    <property type="entry name" value="CSA_PPIASE_2"/>
    <property type="match status" value="1"/>
</dbReference>
<gene>
    <name type="primary">PPIL1</name>
</gene>
<proteinExistence type="evidence at transcript level"/>
<feature type="chain" id="PRO_0000247935" description="Peptidyl-prolyl cis-trans isomerase-like 1">
    <location>
        <begin position="1"/>
        <end position="166"/>
    </location>
</feature>
<feature type="domain" description="PPIase cyclophilin-type" evidence="3">
    <location>
        <begin position="10"/>
        <end position="164"/>
    </location>
</feature>
<feature type="binding site" evidence="1">
    <location>
        <begin position="54"/>
        <end position="65"/>
    </location>
    <ligand>
        <name>cyclosporin A</name>
        <dbReference type="ChEBI" id="CHEBI:4031"/>
    </ligand>
</feature>
<feature type="binding site" evidence="1">
    <location>
        <begin position="70"/>
        <end position="71"/>
    </location>
    <ligand>
        <name>cyclosporin A</name>
        <dbReference type="ChEBI" id="CHEBI:4031"/>
    </ligand>
</feature>
<feature type="binding site" evidence="1">
    <location>
        <begin position="99"/>
        <end position="104"/>
    </location>
    <ligand>
        <name>cyclosporin A</name>
        <dbReference type="ChEBI" id="CHEBI:4031"/>
    </ligand>
</feature>
<feature type="binding site" evidence="1">
    <location>
        <begin position="109"/>
        <end position="113"/>
    </location>
    <ligand>
        <name>cyclosporin A</name>
        <dbReference type="ChEBI" id="CHEBI:4031"/>
    </ligand>
</feature>
<feature type="binding site" evidence="1">
    <location>
        <position position="119"/>
    </location>
    <ligand>
        <name>cyclosporin A</name>
        <dbReference type="ChEBI" id="CHEBI:4031"/>
    </ligand>
</feature>
<feature type="binding site" evidence="1">
    <location>
        <position position="125"/>
    </location>
    <ligand>
        <name>cyclosporin A</name>
        <dbReference type="ChEBI" id="CHEBI:4031"/>
    </ligand>
</feature>
<feature type="modified residue" description="Phosphoserine" evidence="2">
    <location>
        <position position="149"/>
    </location>
</feature>
<comment type="function">
    <text evidence="2">Involved in pre-mRNA splicing as component of the spliceosome. PPIases accelerate the folding of proteins. It catalyzes the cis-trans isomerization of proline imidic peptide bonds in oligopeptides. Catalyzes prolyl peptide bond isomerization in CDC40/PRP17. Plays an important role in embryonic brain development; this function is independent of its isomerase activity.</text>
</comment>
<comment type="catalytic activity">
    <reaction evidence="2">
        <text>[protein]-peptidylproline (omega=180) = [protein]-peptidylproline (omega=0)</text>
        <dbReference type="Rhea" id="RHEA:16237"/>
        <dbReference type="Rhea" id="RHEA-COMP:10747"/>
        <dbReference type="Rhea" id="RHEA-COMP:10748"/>
        <dbReference type="ChEBI" id="CHEBI:83833"/>
        <dbReference type="ChEBI" id="CHEBI:83834"/>
        <dbReference type="EC" id="5.2.1.8"/>
    </reaction>
</comment>
<comment type="activity regulation">
    <text evidence="2">Inhibited by Cyclosporin A.</text>
</comment>
<comment type="subunit">
    <text evidence="2">Identified in the spliceosome C complex. Interacts with SNW1/SKIP. Interacts with CDC40/PRP17; this interaction leads to CDC40 isomerization. Interacts with RBM22.</text>
</comment>
<comment type="subcellular location">
    <subcellularLocation>
        <location evidence="2">Nucleus</location>
    </subcellularLocation>
</comment>
<comment type="similarity">
    <text evidence="4">Belongs to the cyclophilin-type PPIase family. PPIL1 subfamily.</text>
</comment>
<reference key="1">
    <citation type="journal article" date="2005" name="BMC Genomics">
        <title>Characterization of 954 bovine full-CDS cDNA sequences.</title>
        <authorList>
            <person name="Harhay G.P."/>
            <person name="Sonstegard T.S."/>
            <person name="Keele J.W."/>
            <person name="Heaton M.P."/>
            <person name="Clawson M.L."/>
            <person name="Snelling W.M."/>
            <person name="Wiedmann R.T."/>
            <person name="Van Tassell C.P."/>
            <person name="Smith T.P.L."/>
        </authorList>
    </citation>
    <scope>NUCLEOTIDE SEQUENCE [LARGE SCALE MRNA]</scope>
</reference>
<reference key="2">
    <citation type="submission" date="2005-08" db="EMBL/GenBank/DDBJ databases">
        <authorList>
            <consortium name="NIH - Mammalian Gene Collection (MGC) project"/>
        </authorList>
    </citation>
    <scope>NUCLEOTIDE SEQUENCE [LARGE SCALE MRNA]</scope>
    <source>
        <strain>Crossbred X Angus</strain>
        <tissue>Ileum</tissue>
    </source>
</reference>
<accession>Q5E992</accession>